<evidence type="ECO:0000255" key="1">
    <source>
        <dbReference type="HAMAP-Rule" id="MF_01626"/>
    </source>
</evidence>
<organism>
    <name type="scientific">Photorhabdus laumondii subsp. laumondii (strain DSM 15139 / CIP 105565 / TT01)</name>
    <name type="common">Photorhabdus luminescens subsp. laumondii</name>
    <dbReference type="NCBI Taxonomy" id="243265"/>
    <lineage>
        <taxon>Bacteria</taxon>
        <taxon>Pseudomonadati</taxon>
        <taxon>Pseudomonadota</taxon>
        <taxon>Gammaproteobacteria</taxon>
        <taxon>Enterobacterales</taxon>
        <taxon>Morganellaceae</taxon>
        <taxon>Photorhabdus</taxon>
    </lineage>
</organism>
<feature type="chain" id="PRO_0000196586" description="Regulatory protein ViaA">
    <location>
        <begin position="1"/>
        <end position="485"/>
    </location>
</feature>
<comment type="function">
    <text evidence="1">Component of the RavA-ViaA chaperone complex, which may act on the membrane to optimize the function of some of the respiratory chains. ViaA stimulates the ATPase activity of RavA.</text>
</comment>
<comment type="subunit">
    <text evidence="1">Homodimer. Interacts with RavA.</text>
</comment>
<comment type="subcellular location">
    <subcellularLocation>
        <location evidence="1">Cytoplasm</location>
    </subcellularLocation>
</comment>
<comment type="similarity">
    <text evidence="1">Belongs to the ViaA family.</text>
</comment>
<protein>
    <recommendedName>
        <fullName evidence="1">Regulatory protein ViaA</fullName>
    </recommendedName>
    <alternativeName>
        <fullName evidence="1">VWA interacting with AAA+ ATPase</fullName>
    </alternativeName>
</protein>
<proteinExistence type="inferred from homology"/>
<accession>Q7NA82</accession>
<sequence>MISLTTLDLLLSINEGEMIEEIILTLLASPQLAIFFEKHPRLKRALLKDIPGWKHDLQQRIKEALIPVTLAEEFQLYQQILSANTNYFYLKLPDILETLNRIESPFSEEAQKLATNTIADSNTLQTLFIQRWRISLILQTTTFHKQLLEQEKEQLLAELQQKLTLSGNLDPVFSENDRAAGRLWDMSKSQLNHSQNDKQLLIHYSEFLHQQPELKKLAQLLGRSQSVKSKPQENHFFEPVTTIERTPDIIPEQVNGIGQSDDILRLLPIELAILGIEDLEYEFYRKLVEKKLLTYRLQGDNWREKTTLQPVTHYSQEEKPQGPFIICVDTSGSMGKFNEKCAKAFCLALLRIALADNRNCHIMLFTTGIVHYELSSPDGLEQATRFLSQTFKGGTDLAFCLTSTIEKMKEKCWKNADAVVISDFIAQRLPNSLIHQIKNLQLHQQYRFHAVSMSQYGKPDIMRIFDHIWHFDTGLKSRLLRKWRH</sequence>
<reference key="1">
    <citation type="journal article" date="2003" name="Nat. Biotechnol.">
        <title>The genome sequence of the entomopathogenic bacterium Photorhabdus luminescens.</title>
        <authorList>
            <person name="Duchaud E."/>
            <person name="Rusniok C."/>
            <person name="Frangeul L."/>
            <person name="Buchrieser C."/>
            <person name="Givaudan A."/>
            <person name="Taourit S."/>
            <person name="Bocs S."/>
            <person name="Boursaux-Eude C."/>
            <person name="Chandler M."/>
            <person name="Charles J.-F."/>
            <person name="Dassa E."/>
            <person name="Derose R."/>
            <person name="Derzelle S."/>
            <person name="Freyssinet G."/>
            <person name="Gaudriault S."/>
            <person name="Medigue C."/>
            <person name="Lanois A."/>
            <person name="Powell K."/>
            <person name="Siguier P."/>
            <person name="Vincent R."/>
            <person name="Wingate V."/>
            <person name="Zouine M."/>
            <person name="Glaser P."/>
            <person name="Boemare N."/>
            <person name="Danchin A."/>
            <person name="Kunst F."/>
        </authorList>
    </citation>
    <scope>NUCLEOTIDE SEQUENCE [LARGE SCALE GENOMIC DNA]</scope>
    <source>
        <strain>DSM 15139 / CIP 105565 / TT01</strain>
    </source>
</reference>
<gene>
    <name evidence="1" type="primary">viaA</name>
    <name type="ordered locus">plu0053</name>
</gene>
<keyword id="KW-0143">Chaperone</keyword>
<keyword id="KW-0963">Cytoplasm</keyword>
<keyword id="KW-1185">Reference proteome</keyword>
<name>VIAA_PHOLL</name>
<dbReference type="EMBL" id="BX571859">
    <property type="protein sequence ID" value="CAE12348.1"/>
    <property type="molecule type" value="Genomic_DNA"/>
</dbReference>
<dbReference type="RefSeq" id="WP_011144465.1">
    <property type="nucleotide sequence ID" value="NC_005126.1"/>
</dbReference>
<dbReference type="SMR" id="Q7NA82"/>
<dbReference type="STRING" id="243265.plu0053"/>
<dbReference type="GeneID" id="48846353"/>
<dbReference type="KEGG" id="plu:plu0053"/>
<dbReference type="eggNOG" id="COG2425">
    <property type="taxonomic scope" value="Bacteria"/>
</dbReference>
<dbReference type="HOGENOM" id="CLU_022130_0_0_6"/>
<dbReference type="OrthoDB" id="387240at2"/>
<dbReference type="Proteomes" id="UP000002514">
    <property type="component" value="Chromosome"/>
</dbReference>
<dbReference type="GO" id="GO:0005829">
    <property type="term" value="C:cytosol"/>
    <property type="evidence" value="ECO:0007669"/>
    <property type="project" value="TreeGrafter"/>
</dbReference>
<dbReference type="CDD" id="cd01462">
    <property type="entry name" value="VWA_YIEM_type"/>
    <property type="match status" value="1"/>
</dbReference>
<dbReference type="Gene3D" id="3.40.50.410">
    <property type="entry name" value="von Willebrand factor, type A domain"/>
    <property type="match status" value="1"/>
</dbReference>
<dbReference type="HAMAP" id="MF_01626">
    <property type="entry name" value="ViaA"/>
    <property type="match status" value="1"/>
</dbReference>
<dbReference type="InterPro" id="IPR008912">
    <property type="entry name" value="Uncharacterised_CoxE"/>
</dbReference>
<dbReference type="InterPro" id="IPR023481">
    <property type="entry name" value="Uncharacterised_ViaA"/>
</dbReference>
<dbReference type="InterPro" id="IPR002035">
    <property type="entry name" value="VWF_A"/>
</dbReference>
<dbReference type="InterPro" id="IPR036465">
    <property type="entry name" value="vWFA_dom_sf"/>
</dbReference>
<dbReference type="NCBIfam" id="NF008230">
    <property type="entry name" value="PRK10997.1"/>
    <property type="match status" value="1"/>
</dbReference>
<dbReference type="PANTHER" id="PTHR36846">
    <property type="entry name" value="PROTEIN VIAA"/>
    <property type="match status" value="1"/>
</dbReference>
<dbReference type="PANTHER" id="PTHR36846:SF1">
    <property type="entry name" value="PROTEIN VIAA"/>
    <property type="match status" value="1"/>
</dbReference>
<dbReference type="Pfam" id="PF05762">
    <property type="entry name" value="VWA_CoxE"/>
    <property type="match status" value="1"/>
</dbReference>
<dbReference type="SMART" id="SM00327">
    <property type="entry name" value="VWA"/>
    <property type="match status" value="1"/>
</dbReference>
<dbReference type="SUPFAM" id="SSF53300">
    <property type="entry name" value="vWA-like"/>
    <property type="match status" value="1"/>
</dbReference>